<keyword id="KW-0025">Alternative splicing</keyword>
<keyword id="KW-0597">Phosphoprotein</keyword>
<keyword id="KW-1267">Proteomics identification</keyword>
<keyword id="KW-1185">Reference proteome</keyword>
<name>SPAS1_HUMAN</name>
<organism>
    <name type="scientific">Homo sapiens</name>
    <name type="common">Human</name>
    <dbReference type="NCBI Taxonomy" id="9606"/>
    <lineage>
        <taxon>Eukaryota</taxon>
        <taxon>Metazoa</taxon>
        <taxon>Chordata</taxon>
        <taxon>Craniata</taxon>
        <taxon>Vertebrata</taxon>
        <taxon>Euteleostomi</taxon>
        <taxon>Mammalia</taxon>
        <taxon>Eutheria</taxon>
        <taxon>Euarchontoglires</taxon>
        <taxon>Primates</taxon>
        <taxon>Haplorrhini</taxon>
        <taxon>Catarrhini</taxon>
        <taxon>Hominidae</taxon>
        <taxon>Homo</taxon>
    </lineage>
</organism>
<comment type="interaction">
    <interactant intactId="EBI-3923692">
        <id>Q496A3</id>
    </interactant>
    <interactant intactId="EBI-11954292">
        <id>Q86V38</id>
        <label>ATN1</label>
    </interactant>
    <organismsDiffer>false</organismsDiffer>
    <experiments>3</experiments>
</comment>
<comment type="interaction">
    <interactant intactId="EBI-3923692">
        <id>Q496A3</id>
    </interactant>
    <interactant intactId="EBI-718729">
        <id>P55212</id>
        <label>CASP6</label>
    </interactant>
    <organismsDiffer>false</organismsDiffer>
    <experiments>3</experiments>
</comment>
<comment type="interaction">
    <interactant intactId="EBI-3923692">
        <id>Q496A3</id>
    </interactant>
    <interactant intactId="EBI-25837549">
        <id>P28329-3</id>
        <label>CHAT</label>
    </interactant>
    <organismsDiffer>false</organismsDiffer>
    <experiments>3</experiments>
</comment>
<comment type="interaction">
    <interactant intactId="EBI-3923692">
        <id>Q496A3</id>
    </interactant>
    <interactant intactId="EBI-6875961">
        <id>P02489</id>
        <label>CRYAA</label>
    </interactant>
    <organismsDiffer>false</organismsDiffer>
    <experiments>3</experiments>
</comment>
<comment type="interaction">
    <interactant intactId="EBI-3923692">
        <id>Q496A3</id>
    </interactant>
    <interactant intactId="EBI-11962928">
        <id>Q9UI47-2</id>
        <label>CTNNA3</label>
    </interactant>
    <organismsDiffer>false</organismsDiffer>
    <experiments>3</experiments>
</comment>
<comment type="interaction">
    <interactant intactId="EBI-3923692">
        <id>Q496A3</id>
    </interactant>
    <interactant intactId="EBI-1054228">
        <id>P41091</id>
        <label>EIF2S3</label>
    </interactant>
    <organismsDiffer>false</organismsDiffer>
    <experiments>3</experiments>
</comment>
<comment type="interaction">
    <interactant intactId="EBI-3923692">
        <id>Q496A3</id>
    </interactant>
    <interactant intactId="EBI-25852368">
        <id>O75460-2</id>
        <label>ERN1</label>
    </interactant>
    <organismsDiffer>false</organismsDiffer>
    <experiments>3</experiments>
</comment>
<comment type="interaction">
    <interactant intactId="EBI-3923692">
        <id>Q496A3</id>
    </interactant>
    <interactant intactId="EBI-348399">
        <id>P22607</id>
        <label>FGFR3</label>
    </interactant>
    <organismsDiffer>false</organismsDiffer>
    <experiments>3</experiments>
</comment>
<comment type="interaction">
    <interactant intactId="EBI-3923692">
        <id>Q496A3</id>
    </interactant>
    <interactant intactId="EBI-10226858">
        <id>Q0VDC6</id>
        <label>FKBP1A</label>
    </interactant>
    <organismsDiffer>false</organismsDiffer>
    <experiments>3</experiments>
</comment>
<comment type="interaction">
    <interactant intactId="EBI-3923692">
        <id>Q496A3</id>
    </interactant>
    <interactant intactId="EBI-8285963">
        <id>Q14957</id>
        <label>GRIN2C</label>
    </interactant>
    <organismsDiffer>false</organismsDiffer>
    <experiments>3</experiments>
</comment>
<comment type="interaction">
    <interactant intactId="EBI-3923692">
        <id>Q496A3</id>
    </interactant>
    <interactant intactId="EBI-351506">
        <id>P06396</id>
        <label>GSN</label>
    </interactant>
    <organismsDiffer>false</organismsDiffer>
    <experiments>3</experiments>
</comment>
<comment type="interaction">
    <interactant intactId="EBI-3923692">
        <id>Q496A3</id>
    </interactant>
    <interactant intactId="EBI-356991">
        <id>P54652</id>
        <label>HSPA2</label>
    </interactant>
    <organismsDiffer>false</organismsDiffer>
    <experiments>3</experiments>
</comment>
<comment type="interaction">
    <interactant intactId="EBI-3923692">
        <id>Q496A3</id>
    </interactant>
    <interactant intactId="EBI-4397613">
        <id>Q7L273</id>
        <label>KCTD9</label>
    </interactant>
    <organismsDiffer>false</organismsDiffer>
    <experiments>3</experiments>
</comment>
<comment type="interaction">
    <interactant intactId="EBI-3923692">
        <id>Q496A3</id>
    </interactant>
    <interactant intactId="EBI-2432309">
        <id>Q92876</id>
        <label>KLK6</label>
    </interactant>
    <organismsDiffer>false</organismsDiffer>
    <experiments>3</experiments>
</comment>
<comment type="interaction">
    <interactant intactId="EBI-3923692">
        <id>Q496A3</id>
    </interactant>
    <interactant intactId="EBI-21591415">
        <id>P13473-2</id>
        <label>LAMP2</label>
    </interactant>
    <organismsDiffer>false</organismsDiffer>
    <experiments>3</experiments>
</comment>
<comment type="interaction">
    <interactant intactId="EBI-3923692">
        <id>Q496A3</id>
    </interactant>
    <interactant intactId="EBI-2555085">
        <id>Q8IVT2</id>
        <label>MISP</label>
    </interactant>
    <organismsDiffer>false</organismsDiffer>
    <experiments>3</experiments>
</comment>
<comment type="interaction">
    <interactant intactId="EBI-3923692">
        <id>Q496A3</id>
    </interactant>
    <interactant intactId="EBI-1246091">
        <id>O43920</id>
        <label>NDUFS5</label>
    </interactant>
    <organismsDiffer>false</organismsDiffer>
    <experiments>3</experiments>
</comment>
<comment type="interaction">
    <interactant intactId="EBI-3923692">
        <id>Q496A3</id>
    </interactant>
    <interactant intactId="EBI-748974">
        <id>Q96CV9</id>
        <label>OPTN</label>
    </interactant>
    <organismsDiffer>false</organismsDiffer>
    <experiments>3</experiments>
</comment>
<comment type="interaction">
    <interactant intactId="EBI-3923692">
        <id>Q496A3</id>
    </interactant>
    <interactant intactId="EBI-5280197">
        <id>O75400-2</id>
        <label>PRPF40A</label>
    </interactant>
    <organismsDiffer>false</organismsDiffer>
    <experiments>3</experiments>
</comment>
<comment type="interaction">
    <interactant intactId="EBI-3923692">
        <id>Q496A3</id>
    </interactant>
    <interactant intactId="EBI-286642">
        <id>P62826</id>
        <label>RAN</label>
    </interactant>
    <organismsDiffer>false</organismsDiffer>
    <experiments>3</experiments>
</comment>
<comment type="interaction">
    <interactant intactId="EBI-3923692">
        <id>Q496A3</id>
    </interactant>
    <interactant intactId="EBI-1053431">
        <id>P49591</id>
        <label>SARS1</label>
    </interactant>
    <organismsDiffer>false</organismsDiffer>
    <experiments>3</experiments>
</comment>
<comment type="interaction">
    <interactant intactId="EBI-3923692">
        <id>Q496A3</id>
    </interactant>
    <interactant intactId="EBI-2559665">
        <id>Q5JTV8</id>
        <label>TOR1AIP1</label>
    </interactant>
    <organismsDiffer>false</organismsDiffer>
    <experiments>3</experiments>
</comment>
<comment type="interaction">
    <interactant intactId="EBI-3923692">
        <id>Q496A3</id>
    </interactant>
    <interactant intactId="EBI-741480">
        <id>Q9UMX0</id>
        <label>UBQLN1</label>
    </interactant>
    <organismsDiffer>false</organismsDiffer>
    <experiments>3</experiments>
</comment>
<comment type="interaction">
    <interactant intactId="EBI-3923692">
        <id>Q496A3</id>
    </interactant>
    <interactant intactId="EBI-11963196">
        <id>Q15915</id>
        <label>ZIC1</label>
    </interactant>
    <organismsDiffer>false</organismsDiffer>
    <experiments>3</experiments>
</comment>
<comment type="interaction">
    <interactant intactId="EBI-3923692">
        <id>Q496A3</id>
    </interactant>
    <interactant intactId="EBI-25900580">
        <id>Q9Y649</id>
    </interactant>
    <organismsDiffer>false</organismsDiffer>
    <experiments>3</experiments>
</comment>
<comment type="alternative products">
    <event type="alternative splicing"/>
    <isoform>
        <id>Q496A3-1</id>
        <name>1</name>
        <sequence type="displayed"/>
    </isoform>
    <isoform>
        <id>Q496A3-2</id>
        <name>2</name>
        <sequence type="described" ref="VSP_028787"/>
    </isoform>
</comment>
<comment type="miscellaneous">
    <molecule>Isoform 2</molecule>
    <text evidence="5">May be produced at very low levels due to a premature stop codon in the mRNA, leading to nonsense-mediated mRNA decay.</text>
</comment>
<protein>
    <recommendedName>
        <fullName>Spermatogenesis-associated serine-rich protein 1</fullName>
    </recommendedName>
</protein>
<dbReference type="EMBL" id="AK058171">
    <property type="protein sequence ID" value="BAB71701.1"/>
    <property type="molecule type" value="mRNA"/>
</dbReference>
<dbReference type="EMBL" id="BC100956">
    <property type="protein sequence ID" value="AAI00957.1"/>
    <property type="molecule type" value="mRNA"/>
</dbReference>
<dbReference type="EMBL" id="BC100957">
    <property type="protein sequence ID" value="AAI00958.1"/>
    <property type="molecule type" value="mRNA"/>
</dbReference>
<dbReference type="EMBL" id="BC100958">
    <property type="protein sequence ID" value="AAI00959.1"/>
    <property type="molecule type" value="mRNA"/>
</dbReference>
<dbReference type="EMBL" id="BC100959">
    <property type="protein sequence ID" value="AAI00960.1"/>
    <property type="molecule type" value="mRNA"/>
</dbReference>
<dbReference type="EMBL" id="BC110065">
    <property type="protein sequence ID" value="AAI10066.1"/>
    <property type="molecule type" value="mRNA"/>
</dbReference>
<dbReference type="EMBL" id="BC111414">
    <property type="protein sequence ID" value="AAI11415.1"/>
    <property type="molecule type" value="mRNA"/>
</dbReference>
<dbReference type="CCDS" id="CCDS4911.1">
    <molecule id="Q496A3-1"/>
</dbReference>
<dbReference type="RefSeq" id="NP_001359010.1">
    <molecule id="Q496A3-1"/>
    <property type="nucleotide sequence ID" value="NM_001372081.1"/>
</dbReference>
<dbReference type="RefSeq" id="NP_659463.1">
    <molecule id="Q496A3-1"/>
    <property type="nucleotide sequence ID" value="NM_145026.4"/>
</dbReference>
<dbReference type="BioGRID" id="128721">
    <property type="interactions" value="12"/>
</dbReference>
<dbReference type="FunCoup" id="Q496A3">
    <property type="interactions" value="12"/>
</dbReference>
<dbReference type="IntAct" id="Q496A3">
    <property type="interactions" value="32"/>
</dbReference>
<dbReference type="STRING" id="9606.ENSP00000501191"/>
<dbReference type="GlyGen" id="Q496A3">
    <property type="glycosylation" value="1 site, 1 O-linked glycan (1 site)"/>
</dbReference>
<dbReference type="iPTMnet" id="Q496A3"/>
<dbReference type="PhosphoSitePlus" id="Q496A3"/>
<dbReference type="BioMuta" id="SPATS1"/>
<dbReference type="MassIVE" id="Q496A3"/>
<dbReference type="PaxDb" id="9606-ENSP00000424400"/>
<dbReference type="PeptideAtlas" id="Q496A3"/>
<dbReference type="ProteomicsDB" id="61985">
    <molecule id="Q496A3-1"/>
</dbReference>
<dbReference type="ProteomicsDB" id="61986">
    <molecule id="Q496A3-2"/>
</dbReference>
<dbReference type="Antibodypedia" id="56365">
    <property type="antibodies" value="106 antibodies from 19 providers"/>
</dbReference>
<dbReference type="DNASU" id="221409"/>
<dbReference type="Ensembl" id="ENST00000288390.2">
    <molecule id="Q496A3-1"/>
    <property type="protein sequence ID" value="ENSP00000424400.1"/>
    <property type="gene ID" value="ENSG00000249481.7"/>
</dbReference>
<dbReference type="Ensembl" id="ENST00000323108.12">
    <molecule id="Q496A3-1"/>
    <property type="protein sequence ID" value="ENSP00000437552.1"/>
    <property type="gene ID" value="ENSG00000249481.7"/>
</dbReference>
<dbReference type="Ensembl" id="ENST00000674044.1">
    <molecule id="Q496A3-1"/>
    <property type="protein sequence ID" value="ENSP00000501191.1"/>
    <property type="gene ID" value="ENSG00000249481.7"/>
</dbReference>
<dbReference type="GeneID" id="221409"/>
<dbReference type="KEGG" id="hsa:221409"/>
<dbReference type="MANE-Select" id="ENST00000674044.1">
    <property type="protein sequence ID" value="ENSP00000501191.1"/>
    <property type="RefSeq nucleotide sequence ID" value="NM_001372081.1"/>
    <property type="RefSeq protein sequence ID" value="NP_001359010.1"/>
</dbReference>
<dbReference type="UCSC" id="uc003oxk.4">
    <molecule id="Q496A3-1"/>
    <property type="organism name" value="human"/>
</dbReference>
<dbReference type="AGR" id="HGNC:22957"/>
<dbReference type="CTD" id="221409"/>
<dbReference type="GeneCards" id="SPATS1"/>
<dbReference type="HGNC" id="HGNC:22957">
    <property type="gene designation" value="SPATS1"/>
</dbReference>
<dbReference type="HPA" id="ENSG00000249481">
    <property type="expression patterns" value="Group enriched (epididymis, fallopian tube, testis)"/>
</dbReference>
<dbReference type="neXtProt" id="NX_Q496A3"/>
<dbReference type="PharmGKB" id="PA134922278"/>
<dbReference type="VEuPathDB" id="HostDB:ENSG00000249481"/>
<dbReference type="eggNOG" id="ENOG502S4JT">
    <property type="taxonomic scope" value="Eukaryota"/>
</dbReference>
<dbReference type="GeneTree" id="ENSGT00390000006786"/>
<dbReference type="HOGENOM" id="CLU_081878_0_0_1"/>
<dbReference type="InParanoid" id="Q496A3"/>
<dbReference type="OMA" id="NNIHTYH"/>
<dbReference type="OrthoDB" id="186791at2759"/>
<dbReference type="PAN-GO" id="Q496A3">
    <property type="GO annotations" value="0 GO annotations based on evolutionary models"/>
</dbReference>
<dbReference type="PhylomeDB" id="Q496A3"/>
<dbReference type="TreeFam" id="TF337302"/>
<dbReference type="PathwayCommons" id="Q496A3"/>
<dbReference type="SignaLink" id="Q496A3"/>
<dbReference type="BioGRID-ORCS" id="221409">
    <property type="hits" value="26 hits in 1141 CRISPR screens"/>
</dbReference>
<dbReference type="GenomeRNAi" id="221409"/>
<dbReference type="Pharos" id="Q496A3">
    <property type="development level" value="Tbio"/>
</dbReference>
<dbReference type="PRO" id="PR:Q496A3"/>
<dbReference type="Proteomes" id="UP000005640">
    <property type="component" value="Chromosome 6"/>
</dbReference>
<dbReference type="RNAct" id="Q496A3">
    <property type="molecule type" value="protein"/>
</dbReference>
<dbReference type="Bgee" id="ENSG00000249481">
    <property type="expression patterns" value="Expressed in right uterine tube and 48 other cell types or tissues"/>
</dbReference>
<dbReference type="ExpressionAtlas" id="Q496A3">
    <property type="expression patterns" value="baseline and differential"/>
</dbReference>
<dbReference type="InterPro" id="IPR029165">
    <property type="entry name" value="SASRP1"/>
</dbReference>
<dbReference type="PANTHER" id="PTHR35845">
    <property type="entry name" value="SPERMATOGENESIS-ASSOCIATED SERINE-RICH PROTEIN 1"/>
    <property type="match status" value="1"/>
</dbReference>
<dbReference type="PANTHER" id="PTHR35845:SF1">
    <property type="entry name" value="SPERMATOGENESIS-ASSOCIATED SERINE-RICH PROTEIN 1"/>
    <property type="match status" value="1"/>
</dbReference>
<dbReference type="Pfam" id="PF15160">
    <property type="entry name" value="SASRP1"/>
    <property type="match status" value="1"/>
</dbReference>
<evidence type="ECO:0000250" key="1">
    <source>
        <dbReference type="UniProtKB" id="Q811V6"/>
    </source>
</evidence>
<evidence type="ECO:0000256" key="2">
    <source>
        <dbReference type="SAM" id="MobiDB-lite"/>
    </source>
</evidence>
<evidence type="ECO:0000269" key="3">
    <source>
    </source>
</evidence>
<evidence type="ECO:0000303" key="4">
    <source>
    </source>
</evidence>
<evidence type="ECO:0000305" key="5"/>
<gene>
    <name type="primary">SPATS1</name>
</gene>
<reference key="1">
    <citation type="journal article" date="2004" name="Nat. Genet.">
        <title>Complete sequencing and characterization of 21,243 full-length human cDNAs.</title>
        <authorList>
            <person name="Ota T."/>
            <person name="Suzuki Y."/>
            <person name="Nishikawa T."/>
            <person name="Otsuki T."/>
            <person name="Sugiyama T."/>
            <person name="Irie R."/>
            <person name="Wakamatsu A."/>
            <person name="Hayashi K."/>
            <person name="Sato H."/>
            <person name="Nagai K."/>
            <person name="Kimura K."/>
            <person name="Makita H."/>
            <person name="Sekine M."/>
            <person name="Obayashi M."/>
            <person name="Nishi T."/>
            <person name="Shibahara T."/>
            <person name="Tanaka T."/>
            <person name="Ishii S."/>
            <person name="Yamamoto J."/>
            <person name="Saito K."/>
            <person name="Kawai Y."/>
            <person name="Isono Y."/>
            <person name="Nakamura Y."/>
            <person name="Nagahari K."/>
            <person name="Murakami K."/>
            <person name="Yasuda T."/>
            <person name="Iwayanagi T."/>
            <person name="Wagatsuma M."/>
            <person name="Shiratori A."/>
            <person name="Sudo H."/>
            <person name="Hosoiri T."/>
            <person name="Kaku Y."/>
            <person name="Kodaira H."/>
            <person name="Kondo H."/>
            <person name="Sugawara M."/>
            <person name="Takahashi M."/>
            <person name="Kanda K."/>
            <person name="Yokoi T."/>
            <person name="Furuya T."/>
            <person name="Kikkawa E."/>
            <person name="Omura Y."/>
            <person name="Abe K."/>
            <person name="Kamihara K."/>
            <person name="Katsuta N."/>
            <person name="Sato K."/>
            <person name="Tanikawa M."/>
            <person name="Yamazaki M."/>
            <person name="Ninomiya K."/>
            <person name="Ishibashi T."/>
            <person name="Yamashita H."/>
            <person name="Murakawa K."/>
            <person name="Fujimori K."/>
            <person name="Tanai H."/>
            <person name="Kimata M."/>
            <person name="Watanabe M."/>
            <person name="Hiraoka S."/>
            <person name="Chiba Y."/>
            <person name="Ishida S."/>
            <person name="Ono Y."/>
            <person name="Takiguchi S."/>
            <person name="Watanabe S."/>
            <person name="Yosida M."/>
            <person name="Hotuta T."/>
            <person name="Kusano J."/>
            <person name="Kanehori K."/>
            <person name="Takahashi-Fujii A."/>
            <person name="Hara H."/>
            <person name="Tanase T.-O."/>
            <person name="Nomura Y."/>
            <person name="Togiya S."/>
            <person name="Komai F."/>
            <person name="Hara R."/>
            <person name="Takeuchi K."/>
            <person name="Arita M."/>
            <person name="Imose N."/>
            <person name="Musashino K."/>
            <person name="Yuuki H."/>
            <person name="Oshima A."/>
            <person name="Sasaki N."/>
            <person name="Aotsuka S."/>
            <person name="Yoshikawa Y."/>
            <person name="Matsunawa H."/>
            <person name="Ichihara T."/>
            <person name="Shiohata N."/>
            <person name="Sano S."/>
            <person name="Moriya S."/>
            <person name="Momiyama H."/>
            <person name="Satoh N."/>
            <person name="Takami S."/>
            <person name="Terashima Y."/>
            <person name="Suzuki O."/>
            <person name="Nakagawa S."/>
            <person name="Senoh A."/>
            <person name="Mizoguchi H."/>
            <person name="Goto Y."/>
            <person name="Shimizu F."/>
            <person name="Wakebe H."/>
            <person name="Hishigaki H."/>
            <person name="Watanabe T."/>
            <person name="Sugiyama A."/>
            <person name="Takemoto M."/>
            <person name="Kawakami B."/>
            <person name="Yamazaki M."/>
            <person name="Watanabe K."/>
            <person name="Kumagai A."/>
            <person name="Itakura S."/>
            <person name="Fukuzumi Y."/>
            <person name="Fujimori Y."/>
            <person name="Komiyama M."/>
            <person name="Tashiro H."/>
            <person name="Tanigami A."/>
            <person name="Fujiwara T."/>
            <person name="Ono T."/>
            <person name="Yamada K."/>
            <person name="Fujii Y."/>
            <person name="Ozaki K."/>
            <person name="Hirao M."/>
            <person name="Ohmori Y."/>
            <person name="Kawabata A."/>
            <person name="Hikiji T."/>
            <person name="Kobatake N."/>
            <person name="Inagaki H."/>
            <person name="Ikema Y."/>
            <person name="Okamoto S."/>
            <person name="Okitani R."/>
            <person name="Kawakami T."/>
            <person name="Noguchi S."/>
            <person name="Itoh T."/>
            <person name="Shigeta K."/>
            <person name="Senba T."/>
            <person name="Matsumura K."/>
            <person name="Nakajima Y."/>
            <person name="Mizuno T."/>
            <person name="Morinaga M."/>
            <person name="Sasaki M."/>
            <person name="Togashi T."/>
            <person name="Oyama M."/>
            <person name="Hata H."/>
            <person name="Watanabe M."/>
            <person name="Komatsu T."/>
            <person name="Mizushima-Sugano J."/>
            <person name="Satoh T."/>
            <person name="Shirai Y."/>
            <person name="Takahashi Y."/>
            <person name="Nakagawa K."/>
            <person name="Okumura K."/>
            <person name="Nagase T."/>
            <person name="Nomura N."/>
            <person name="Kikuchi H."/>
            <person name="Masuho Y."/>
            <person name="Yamashita R."/>
            <person name="Nakai K."/>
            <person name="Yada T."/>
            <person name="Nakamura Y."/>
            <person name="Ohara O."/>
            <person name="Isogai T."/>
            <person name="Sugano S."/>
        </authorList>
    </citation>
    <scope>NUCLEOTIDE SEQUENCE [LARGE SCALE MRNA] (ISOFORM 1)</scope>
    <source>
        <tissue>Testis</tissue>
    </source>
</reference>
<reference key="2">
    <citation type="journal article" date="2004" name="Genome Res.">
        <title>The status, quality, and expansion of the NIH full-length cDNA project: the Mammalian Gene Collection (MGC).</title>
        <authorList>
            <consortium name="The MGC Project Team"/>
        </authorList>
    </citation>
    <scope>NUCLEOTIDE SEQUENCE [LARGE SCALE MRNA] (ISOFORMS 1 AND 2)</scope>
    <scope>VARIANT ARG-8</scope>
</reference>
<proteinExistence type="evidence at protein level"/>
<sequence length="300" mass="33705">MSPSMLTGNSPRGCRLPSISSTTCGRQLEKVPEKRDSGMTEVERTYSANCSDFLESKGCFANTTPSGKSVSSSSSVETGPSVSEPPGLPRVSAYVDTTADLDRKLSFSHSDHSSEMSLPEVQKDKYPEEFSLLKLQTKDGHRPEWTFYPRFSSNIHTYHVGKQCFFNGVFLGNKRSLSERTVDKCFGRKKYDIDPRNGIPKLTPGDNPYMYPEQSKGFHKAGSMLPPVNFSIVPYEKKFDTFIPLEPLPQIPNLPFWVKEKANSLKNEIQEVEELDNWQPAVPLMHMLHLSGALDFPRQS</sequence>
<feature type="chain" id="PRO_0000307694" description="Spermatogenesis-associated serine-rich protein 1">
    <location>
        <begin position="1"/>
        <end position="300"/>
    </location>
</feature>
<feature type="region of interest" description="Disordered" evidence="2">
    <location>
        <begin position="1"/>
        <end position="42"/>
    </location>
</feature>
<feature type="region of interest" description="Disordered" evidence="2">
    <location>
        <begin position="64"/>
        <end position="91"/>
    </location>
</feature>
<feature type="compositionally biased region" description="Polar residues" evidence="2">
    <location>
        <begin position="1"/>
        <end position="10"/>
    </location>
</feature>
<feature type="compositionally biased region" description="Basic and acidic residues" evidence="2">
    <location>
        <begin position="27"/>
        <end position="42"/>
    </location>
</feature>
<feature type="compositionally biased region" description="Low complexity" evidence="2">
    <location>
        <begin position="64"/>
        <end position="85"/>
    </location>
</feature>
<feature type="modified residue" description="Phosphoserine" evidence="1">
    <location>
        <position position="113"/>
    </location>
</feature>
<feature type="splice variant" id="VSP_028787" description="In isoform 2." evidence="4">
    <location>
        <begin position="1"/>
        <end position="115"/>
    </location>
</feature>
<feature type="sequence variant" id="VAR_036631" description="In dbSNP:rs10948132." evidence="3">
    <original>G</original>
    <variation>R</variation>
    <location>
        <position position="8"/>
    </location>
</feature>
<feature type="sequence conflict" description="In Ref. 2; AAI00957." evidence="5" ref="2">
    <original>N</original>
    <variation>I</variation>
    <location>
        <position position="277"/>
    </location>
</feature>
<accession>Q496A3</accession>
<accession>Q496A2</accession>
<accession>Q496A5</accession>
<accession>Q96LJ0</accession>